<accession>P01202</accession>
<keyword id="KW-0903">Direct protein sequencing</keyword>
<keyword id="KW-0372">Hormone</keyword>
<keyword id="KW-1185">Reference proteome</keyword>
<keyword id="KW-0964">Secreted</keyword>
<dbReference type="PIR" id="A01467">
    <property type="entry name" value="MTHOB"/>
</dbReference>
<dbReference type="STRING" id="9796.ENSECAP00000013923"/>
<dbReference type="PaxDb" id="9796-ENSECAP00000013923"/>
<dbReference type="InParanoid" id="P01202"/>
<dbReference type="Proteomes" id="UP000002281">
    <property type="component" value="Unplaced"/>
</dbReference>
<dbReference type="GO" id="GO:0005576">
    <property type="term" value="C:extracellular region"/>
    <property type="evidence" value="ECO:0007669"/>
    <property type="project" value="UniProtKB-SubCell"/>
</dbReference>
<dbReference type="GO" id="GO:0005179">
    <property type="term" value="F:hormone activity"/>
    <property type="evidence" value="ECO:0007669"/>
    <property type="project" value="UniProtKB-KW"/>
</dbReference>
<dbReference type="InterPro" id="IPR013531">
    <property type="entry name" value="Mcrtin_ACTH_cent"/>
</dbReference>
<dbReference type="Pfam" id="PF00976">
    <property type="entry name" value="ACTH_domain"/>
    <property type="match status" value="1"/>
</dbReference>
<comment type="function">
    <text>MSH (melanocyte-stimulating hormone) increases the pigmentation of skin by increasing melanin production in melanocytes.</text>
</comment>
<comment type="subcellular location">
    <subcellularLocation>
        <location>Secreted</location>
    </subcellularLocation>
</comment>
<comment type="similarity">
    <text evidence="1">Belongs to the POMC family.</text>
</comment>
<sequence length="18" mass="2235">DEGPYKMEHFRWGSPRKD</sequence>
<reference key="1">
    <citation type="journal article" date="1961" name="Gen. Comp. Endocrinol.">
        <title>The isolation and structure of beta-melanocyte-stimulating hormone from horse pituitary glands.</title>
        <authorList>
            <person name="Dixon J.S."/>
            <person name="Li C.H."/>
        </authorList>
    </citation>
    <scope>PROTEIN SEQUENCE</scope>
    <source>
        <tissue>Pituitary</tissue>
    </source>
</reference>
<name>MLB_HORSE</name>
<proteinExistence type="evidence at protein level"/>
<protein>
    <recommendedName>
        <fullName>Melanotropin beta</fullName>
    </recommendedName>
    <alternativeName>
        <fullName>Beta-MSH</fullName>
    </alternativeName>
</protein>
<evidence type="ECO:0000305" key="1"/>
<organism>
    <name type="scientific">Equus caballus</name>
    <name type="common">Horse</name>
    <dbReference type="NCBI Taxonomy" id="9796"/>
    <lineage>
        <taxon>Eukaryota</taxon>
        <taxon>Metazoa</taxon>
        <taxon>Chordata</taxon>
        <taxon>Craniata</taxon>
        <taxon>Vertebrata</taxon>
        <taxon>Euteleostomi</taxon>
        <taxon>Mammalia</taxon>
        <taxon>Eutheria</taxon>
        <taxon>Laurasiatheria</taxon>
        <taxon>Perissodactyla</taxon>
        <taxon>Equidae</taxon>
        <taxon>Equus</taxon>
    </lineage>
</organism>
<feature type="peptide" id="PRO_0000044294" description="Melanotropin beta">
    <location>
        <begin position="1"/>
        <end position="18"/>
    </location>
</feature>